<organism>
    <name type="scientific">Bifidobacterium longum subsp. infantis (strain ATCC 15697 / DSM 20088 / JCM 1222 / NCTC 11817 / S12)</name>
    <dbReference type="NCBI Taxonomy" id="391904"/>
    <lineage>
        <taxon>Bacteria</taxon>
        <taxon>Bacillati</taxon>
        <taxon>Actinomycetota</taxon>
        <taxon>Actinomycetes</taxon>
        <taxon>Bifidobacteriales</taxon>
        <taxon>Bifidobacteriaceae</taxon>
        <taxon>Bifidobacterium</taxon>
    </lineage>
</organism>
<sequence length="193" mass="20857">MQELEERIQSEGTVKEGDVLKVDAFLNHQCDVRLFDRMGSAWAAHFAGKHITKILTIEASGIGIACVAAQHFGNVPVVFAKKAQSINLDGDQYTTTVYSFTKQKEFPVIVAKKYLNAGDHVLLIDDFLANGKALRGLINLCEAAGATVEGIGIAVEKGFQGGGDTLRAEGYDVDSLAIVESMNPETGEITFRH</sequence>
<accession>B7GSB6</accession>
<accession>E8ML27</accession>
<proteinExistence type="inferred from homology"/>
<gene>
    <name evidence="1" type="primary">xpt</name>
    <name type="ordered locus">Blon_1617</name>
    <name type="ordered locus">BLIJ_1672</name>
</gene>
<dbReference type="EC" id="2.4.2.22" evidence="1"/>
<dbReference type="EMBL" id="CP001095">
    <property type="protein sequence ID" value="ACJ52696.1"/>
    <property type="molecule type" value="Genomic_DNA"/>
</dbReference>
<dbReference type="EMBL" id="AP010889">
    <property type="protein sequence ID" value="BAJ69254.1"/>
    <property type="molecule type" value="Genomic_DNA"/>
</dbReference>
<dbReference type="RefSeq" id="WP_012577931.1">
    <property type="nucleotide sequence ID" value="NC_011593.1"/>
</dbReference>
<dbReference type="SMR" id="B7GSB6"/>
<dbReference type="KEGG" id="bln:Blon_1617"/>
<dbReference type="KEGG" id="blon:BLIJ_1672"/>
<dbReference type="PATRIC" id="fig|391904.8.peg.1685"/>
<dbReference type="HOGENOM" id="CLU_099015_0_0_11"/>
<dbReference type="UniPathway" id="UPA00602">
    <property type="reaction ID" value="UER00658"/>
</dbReference>
<dbReference type="Proteomes" id="UP000001360">
    <property type="component" value="Chromosome"/>
</dbReference>
<dbReference type="GO" id="GO:0005737">
    <property type="term" value="C:cytoplasm"/>
    <property type="evidence" value="ECO:0007669"/>
    <property type="project" value="UniProtKB-SubCell"/>
</dbReference>
<dbReference type="GO" id="GO:0000310">
    <property type="term" value="F:xanthine phosphoribosyltransferase activity"/>
    <property type="evidence" value="ECO:0007669"/>
    <property type="project" value="UniProtKB-UniRule"/>
</dbReference>
<dbReference type="GO" id="GO:0006166">
    <property type="term" value="P:purine ribonucleoside salvage"/>
    <property type="evidence" value="ECO:0007669"/>
    <property type="project" value="UniProtKB-KW"/>
</dbReference>
<dbReference type="GO" id="GO:0046110">
    <property type="term" value="P:xanthine metabolic process"/>
    <property type="evidence" value="ECO:0007669"/>
    <property type="project" value="InterPro"/>
</dbReference>
<dbReference type="GO" id="GO:0032265">
    <property type="term" value="P:XMP salvage"/>
    <property type="evidence" value="ECO:0007669"/>
    <property type="project" value="UniProtKB-UniRule"/>
</dbReference>
<dbReference type="CDD" id="cd06223">
    <property type="entry name" value="PRTases_typeI"/>
    <property type="match status" value="1"/>
</dbReference>
<dbReference type="Gene3D" id="3.40.50.2020">
    <property type="match status" value="1"/>
</dbReference>
<dbReference type="HAMAP" id="MF_01184">
    <property type="entry name" value="XPRTase"/>
    <property type="match status" value="1"/>
</dbReference>
<dbReference type="InterPro" id="IPR000836">
    <property type="entry name" value="PRibTrfase_dom"/>
</dbReference>
<dbReference type="InterPro" id="IPR029057">
    <property type="entry name" value="PRTase-like"/>
</dbReference>
<dbReference type="InterPro" id="IPR050118">
    <property type="entry name" value="Pur/Pyrimidine_PRTase"/>
</dbReference>
<dbReference type="InterPro" id="IPR010079">
    <property type="entry name" value="Xanthine_PRibTrfase"/>
</dbReference>
<dbReference type="NCBIfam" id="NF006671">
    <property type="entry name" value="PRK09219.1"/>
    <property type="match status" value="1"/>
</dbReference>
<dbReference type="NCBIfam" id="TIGR01744">
    <property type="entry name" value="XPRTase"/>
    <property type="match status" value="1"/>
</dbReference>
<dbReference type="PANTHER" id="PTHR43864">
    <property type="entry name" value="HYPOXANTHINE/GUANINE PHOSPHORIBOSYLTRANSFERASE"/>
    <property type="match status" value="1"/>
</dbReference>
<dbReference type="PANTHER" id="PTHR43864:SF1">
    <property type="entry name" value="XANTHINE PHOSPHORIBOSYLTRANSFERASE"/>
    <property type="match status" value="1"/>
</dbReference>
<dbReference type="Pfam" id="PF00156">
    <property type="entry name" value="Pribosyltran"/>
    <property type="match status" value="1"/>
</dbReference>
<dbReference type="SUPFAM" id="SSF53271">
    <property type="entry name" value="PRTase-like"/>
    <property type="match status" value="1"/>
</dbReference>
<comment type="function">
    <text evidence="1">Converts the preformed base xanthine, a product of nucleic acid breakdown, to xanthosine 5'-monophosphate (XMP), so it can be reused for RNA or DNA synthesis.</text>
</comment>
<comment type="catalytic activity">
    <reaction evidence="1">
        <text>XMP + diphosphate = xanthine + 5-phospho-alpha-D-ribose 1-diphosphate</text>
        <dbReference type="Rhea" id="RHEA:10800"/>
        <dbReference type="ChEBI" id="CHEBI:17712"/>
        <dbReference type="ChEBI" id="CHEBI:33019"/>
        <dbReference type="ChEBI" id="CHEBI:57464"/>
        <dbReference type="ChEBI" id="CHEBI:58017"/>
        <dbReference type="EC" id="2.4.2.22"/>
    </reaction>
</comment>
<comment type="pathway">
    <text evidence="1">Purine metabolism; XMP biosynthesis via salvage pathway; XMP from xanthine: step 1/1.</text>
</comment>
<comment type="subunit">
    <text evidence="1">Homodimer.</text>
</comment>
<comment type="subcellular location">
    <subcellularLocation>
        <location evidence="1">Cytoplasm</location>
    </subcellularLocation>
</comment>
<comment type="similarity">
    <text evidence="1">Belongs to the purine/pyrimidine phosphoribosyltransferase family. Xpt subfamily.</text>
</comment>
<evidence type="ECO:0000255" key="1">
    <source>
        <dbReference type="HAMAP-Rule" id="MF_01184"/>
    </source>
</evidence>
<protein>
    <recommendedName>
        <fullName evidence="1">Xanthine phosphoribosyltransferase</fullName>
        <shortName evidence="1">XPRTase</shortName>
        <ecNumber evidence="1">2.4.2.22</ecNumber>
    </recommendedName>
</protein>
<reference key="1">
    <citation type="journal article" date="2008" name="Proc. Natl. Acad. Sci. U.S.A.">
        <title>The genome sequence of Bifidobacterium longum subsp. infantis reveals adaptations for milk utilization within the infant microbiome.</title>
        <authorList>
            <person name="Sela D.A."/>
            <person name="Chapman J."/>
            <person name="Adeuya A."/>
            <person name="Kim J.H."/>
            <person name="Chen F."/>
            <person name="Whitehead T.R."/>
            <person name="Lapidus A."/>
            <person name="Rokhsar D.S."/>
            <person name="Lebrilla C.B."/>
            <person name="German J.B."/>
            <person name="Price N.P."/>
            <person name="Richardson P.M."/>
            <person name="Mills D.A."/>
        </authorList>
    </citation>
    <scope>NUCLEOTIDE SEQUENCE [LARGE SCALE GENOMIC DNA]</scope>
    <source>
        <strain>ATCC 15697 / DSM 20088 / JCM 1222 / NCTC 11817 / S12</strain>
    </source>
</reference>
<reference key="2">
    <citation type="journal article" date="2011" name="Nature">
        <title>Bifidobacteria can protect from enteropathogenic infection through production of acetate.</title>
        <authorList>
            <person name="Fukuda S."/>
            <person name="Toh H."/>
            <person name="Hase K."/>
            <person name="Oshima K."/>
            <person name="Nakanishi Y."/>
            <person name="Yoshimura K."/>
            <person name="Tobe T."/>
            <person name="Clarke J.M."/>
            <person name="Topping D.L."/>
            <person name="Suzuki T."/>
            <person name="Taylor T.D."/>
            <person name="Itoh K."/>
            <person name="Kikuchi J."/>
            <person name="Morita H."/>
            <person name="Hattori M."/>
            <person name="Ohno H."/>
        </authorList>
    </citation>
    <scope>NUCLEOTIDE SEQUENCE [LARGE SCALE GENOMIC DNA]</scope>
    <source>
        <strain>ATCC 15697 / DSM 20088 / JCM 1222 / NCTC 11817 / S12</strain>
    </source>
</reference>
<keyword id="KW-0963">Cytoplasm</keyword>
<keyword id="KW-0328">Glycosyltransferase</keyword>
<keyword id="KW-0660">Purine salvage</keyword>
<keyword id="KW-0808">Transferase</keyword>
<feature type="chain" id="PRO_1000164448" description="Xanthine phosphoribosyltransferase">
    <location>
        <begin position="1"/>
        <end position="193"/>
    </location>
</feature>
<feature type="binding site" evidence="1">
    <location>
        <position position="20"/>
    </location>
    <ligand>
        <name>xanthine</name>
        <dbReference type="ChEBI" id="CHEBI:17712"/>
    </ligand>
</feature>
<feature type="binding site" evidence="1">
    <location>
        <position position="27"/>
    </location>
    <ligand>
        <name>xanthine</name>
        <dbReference type="ChEBI" id="CHEBI:17712"/>
    </ligand>
</feature>
<feature type="binding site" evidence="1">
    <location>
        <begin position="129"/>
        <end position="133"/>
    </location>
    <ligand>
        <name>5-phospho-alpha-D-ribose 1-diphosphate</name>
        <dbReference type="ChEBI" id="CHEBI:58017"/>
    </ligand>
</feature>
<feature type="binding site" evidence="1">
    <location>
        <position position="157"/>
    </location>
    <ligand>
        <name>xanthine</name>
        <dbReference type="ChEBI" id="CHEBI:17712"/>
    </ligand>
</feature>
<name>XPT_BIFLS</name>